<keyword id="KW-1185">Reference proteome</keyword>
<keyword id="KW-0687">Ribonucleoprotein</keyword>
<keyword id="KW-0689">Ribosomal protein</keyword>
<organism>
    <name type="scientific">Caenorhabditis elegans</name>
    <dbReference type="NCBI Taxonomy" id="6239"/>
    <lineage>
        <taxon>Eukaryota</taxon>
        <taxon>Metazoa</taxon>
        <taxon>Ecdysozoa</taxon>
        <taxon>Nematoda</taxon>
        <taxon>Chromadorea</taxon>
        <taxon>Rhabditida</taxon>
        <taxon>Rhabditina</taxon>
        <taxon>Rhabditomorpha</taxon>
        <taxon>Rhabditoidea</taxon>
        <taxon>Rhabditidae</taxon>
        <taxon>Peloderinae</taxon>
        <taxon>Caenorhabditis</taxon>
    </lineage>
</organism>
<comment type="function">
    <text evidence="1">Plays an important role in the elongation step of protein synthesis.</text>
</comment>
<comment type="subunit">
    <text evidence="1">P1 and P2 exist as dimers at the large ribosomal subunit.</text>
</comment>
<comment type="similarity">
    <text evidence="3">Belongs to the eukaryotic ribosomal protein P1/P2 family.</text>
</comment>
<proteinExistence type="inferred from homology"/>
<name>RLA1_CAEEL</name>
<evidence type="ECO:0000250" key="1">
    <source>
        <dbReference type="UniProtKB" id="P05386"/>
    </source>
</evidence>
<evidence type="ECO:0000256" key="2">
    <source>
        <dbReference type="SAM" id="MobiDB-lite"/>
    </source>
</evidence>
<evidence type="ECO:0000305" key="3"/>
<evidence type="ECO:0000312" key="4">
    <source>
        <dbReference type="WormBase" id="Y37E3.7"/>
    </source>
</evidence>
<feature type="chain" id="PRO_0000157690" description="Large ribosomal subunit protein P1">
    <location>
        <begin position="1"/>
        <end position="111"/>
    </location>
</feature>
<feature type="region of interest" description="Disordered" evidence="2">
    <location>
        <begin position="65"/>
        <end position="111"/>
    </location>
</feature>
<feature type="compositionally biased region" description="Low complexity" evidence="2">
    <location>
        <begin position="65"/>
        <end position="89"/>
    </location>
</feature>
<feature type="sequence conflict" description="In Ref. 1; AAB48625." evidence="3" ref="1">
    <original>Y</original>
    <variation>N</variation>
    <location>
        <position position="42"/>
    </location>
</feature>
<reference key="1">
    <citation type="submission" date="1997-02" db="EMBL/GenBank/DDBJ databases">
        <authorList>
            <person name="Blaxter M.L."/>
            <person name="Brodie J."/>
        </authorList>
    </citation>
    <scope>NUCLEOTIDE SEQUENCE [MRNA]</scope>
    <source>
        <strain>Bristol N2</strain>
    </source>
</reference>
<reference key="2">
    <citation type="journal article" date="1998" name="Science">
        <title>Genome sequence of the nematode C. elegans: a platform for investigating biology.</title>
        <authorList>
            <consortium name="The C. elegans sequencing consortium"/>
        </authorList>
    </citation>
    <scope>NUCLEOTIDE SEQUENCE [LARGE SCALE GENOMIC DNA]</scope>
    <source>
        <strain>Bristol N2</strain>
    </source>
</reference>
<protein>
    <recommendedName>
        <fullName evidence="3">Large ribosomal subunit protein P1</fullName>
    </recommendedName>
    <alternativeName>
        <fullName>60S acidic ribosomal protein P1</fullName>
    </alternativeName>
    <alternativeName>
        <fullName>Ribosomal protein large subunit P1</fullName>
    </alternativeName>
    <alternativeName>
        <fullName evidence="4">Ribosomal protein lateral stalk subunit P1</fullName>
    </alternativeName>
</protein>
<dbReference type="EMBL" id="U89307">
    <property type="protein sequence ID" value="AAB48625.1"/>
    <property type="molecule type" value="mRNA"/>
</dbReference>
<dbReference type="EMBL" id="FO081769">
    <property type="protein sequence ID" value="CCD73427.1"/>
    <property type="molecule type" value="Genomic_DNA"/>
</dbReference>
<dbReference type="RefSeq" id="NP_001380045.1">
    <property type="nucleotide sequence ID" value="NM_001393012.1"/>
</dbReference>
<dbReference type="RefSeq" id="NP_740801.1">
    <property type="nucleotide sequence ID" value="NM_170818.4"/>
</dbReference>
<dbReference type="SMR" id="P91913"/>
<dbReference type="BioGRID" id="37253">
    <property type="interactions" value="104"/>
</dbReference>
<dbReference type="FunCoup" id="P91913">
    <property type="interactions" value="904"/>
</dbReference>
<dbReference type="IntAct" id="P91913">
    <property type="interactions" value="3"/>
</dbReference>
<dbReference type="STRING" id="6239.Y37E3.7.3"/>
<dbReference type="PaxDb" id="6239-Y37E3.7.2"/>
<dbReference type="PeptideAtlas" id="P91913"/>
<dbReference type="EnsemblMetazoa" id="Y37E3.7.1">
    <property type="protein sequence ID" value="Y37E3.7.1"/>
    <property type="gene ID" value="WBGene00004409"/>
</dbReference>
<dbReference type="EnsemblMetazoa" id="Y37E3.7.2">
    <property type="protein sequence ID" value="Y37E3.7.2"/>
    <property type="gene ID" value="WBGene00004409"/>
</dbReference>
<dbReference type="GeneID" id="171766"/>
<dbReference type="UCSC" id="F18A1.5">
    <property type="organism name" value="c. elegans"/>
</dbReference>
<dbReference type="AGR" id="WB:WBGene00004409"/>
<dbReference type="WormBase" id="Y37E3.7">
    <property type="protein sequence ID" value="CE26658"/>
    <property type="gene ID" value="WBGene00004409"/>
    <property type="gene designation" value="rplp-1"/>
</dbReference>
<dbReference type="eggNOG" id="KOG1762">
    <property type="taxonomic scope" value="Eukaryota"/>
</dbReference>
<dbReference type="GeneTree" id="ENSGT00940000170577"/>
<dbReference type="HOGENOM" id="CLU_114656_1_0_1"/>
<dbReference type="InParanoid" id="P91913"/>
<dbReference type="OMA" id="EYIYAAM"/>
<dbReference type="OrthoDB" id="2194681at2759"/>
<dbReference type="PhylomeDB" id="P91913"/>
<dbReference type="Reactome" id="R-CEL-156827">
    <property type="pathway name" value="L13a-mediated translational silencing of Ceruloplasmin expression"/>
</dbReference>
<dbReference type="Reactome" id="R-CEL-1799339">
    <property type="pathway name" value="SRP-dependent cotranslational protein targeting to membrane"/>
</dbReference>
<dbReference type="Reactome" id="R-CEL-72689">
    <property type="pathway name" value="Formation of a pool of free 40S subunits"/>
</dbReference>
<dbReference type="Reactome" id="R-CEL-72706">
    <property type="pathway name" value="GTP hydrolysis and joining of the 60S ribosomal subunit"/>
</dbReference>
<dbReference type="Reactome" id="R-CEL-975956">
    <property type="pathway name" value="Nonsense Mediated Decay (NMD) independent of the Exon Junction Complex (EJC)"/>
</dbReference>
<dbReference type="Reactome" id="R-CEL-975957">
    <property type="pathway name" value="Nonsense Mediated Decay (NMD) enhanced by the Exon Junction Complex (EJC)"/>
</dbReference>
<dbReference type="PRO" id="PR:P91913"/>
<dbReference type="Proteomes" id="UP000001940">
    <property type="component" value="Chromosome I"/>
</dbReference>
<dbReference type="Bgee" id="WBGene00004409">
    <property type="expression patterns" value="Expressed in pharyngeal muscle cell (C elegans) and 4 other cell types or tissues"/>
</dbReference>
<dbReference type="GO" id="GO:0022625">
    <property type="term" value="C:cytosolic large ribosomal subunit"/>
    <property type="evidence" value="ECO:0000318"/>
    <property type="project" value="GO_Central"/>
</dbReference>
<dbReference type="GO" id="GO:0030295">
    <property type="term" value="F:protein kinase activator activity"/>
    <property type="evidence" value="ECO:0000318"/>
    <property type="project" value="GO_Central"/>
</dbReference>
<dbReference type="GO" id="GO:0043021">
    <property type="term" value="F:ribonucleoprotein complex binding"/>
    <property type="evidence" value="ECO:0000318"/>
    <property type="project" value="GO_Central"/>
</dbReference>
<dbReference type="GO" id="GO:0003735">
    <property type="term" value="F:structural constituent of ribosome"/>
    <property type="evidence" value="ECO:0000318"/>
    <property type="project" value="GO_Central"/>
</dbReference>
<dbReference type="GO" id="GO:0002181">
    <property type="term" value="P:cytoplasmic translation"/>
    <property type="evidence" value="ECO:0000318"/>
    <property type="project" value="GO_Central"/>
</dbReference>
<dbReference type="GO" id="GO:0006414">
    <property type="term" value="P:translational elongation"/>
    <property type="evidence" value="ECO:0007669"/>
    <property type="project" value="InterPro"/>
</dbReference>
<dbReference type="CDD" id="cd05831">
    <property type="entry name" value="Ribosomal_P1"/>
    <property type="match status" value="1"/>
</dbReference>
<dbReference type="FunFam" id="1.10.10.1410:FF:000001">
    <property type="entry name" value="60S acidic ribosomal protein P1"/>
    <property type="match status" value="1"/>
</dbReference>
<dbReference type="Gene3D" id="1.10.10.1410">
    <property type="match status" value="1"/>
</dbReference>
<dbReference type="HAMAP" id="MF_01478">
    <property type="entry name" value="Ribosomal_L12_arch"/>
    <property type="match status" value="1"/>
</dbReference>
<dbReference type="InterPro" id="IPR038716">
    <property type="entry name" value="P1/P2_N_sf"/>
</dbReference>
<dbReference type="InterPro" id="IPR027534">
    <property type="entry name" value="Ribosomal_P1/P2"/>
</dbReference>
<dbReference type="InterPro" id="IPR001859">
    <property type="entry name" value="Ribosomal_P1/P2_euk"/>
</dbReference>
<dbReference type="PANTHER" id="PTHR45696">
    <property type="entry name" value="60S ACIDIC RIBOSOMAL PROTEIN P1"/>
    <property type="match status" value="1"/>
</dbReference>
<dbReference type="PANTHER" id="PTHR45696:SF10">
    <property type="entry name" value="LARGE RIBOSOMAL SUBUNIT PROTEIN P1"/>
    <property type="match status" value="1"/>
</dbReference>
<dbReference type="Pfam" id="PF00428">
    <property type="entry name" value="Ribosomal_60s"/>
    <property type="match status" value="1"/>
</dbReference>
<dbReference type="PRINTS" id="PR00456">
    <property type="entry name" value="RIBOSOMALP2"/>
</dbReference>
<gene>
    <name evidence="4" type="primary">rplp-1</name>
    <name type="synonym">rla-1</name>
    <name type="synonym">rpa-1</name>
    <name type="ORF">Y37E3.7</name>
</gene>
<sequence length="111" mass="11284">MASNQELACVYAALILQDDEVAITGEKIATLLKAANVEFEPYWPGLFAKALEGVDVKNLITSVSSGAGSGPAPAAAAAAPAAGGAAPAAETKKKEEPKEESDDDMGFGLFD</sequence>
<accession>P91913</accession>
<accession>Q9GR59</accession>